<dbReference type="EC" id="3.1.26.11" evidence="4"/>
<dbReference type="EMBL" id="AB023046">
    <property type="protein sequence ID" value="BAB01266.1"/>
    <property type="status" value="ALT_SEQ"/>
    <property type="molecule type" value="Genomic_DNA"/>
</dbReference>
<dbReference type="EMBL" id="CP002686">
    <property type="protein sequence ID" value="AEE75791.1"/>
    <property type="molecule type" value="Genomic_DNA"/>
</dbReference>
<dbReference type="EMBL" id="AK117304">
    <property type="protein sequence ID" value="BAC41975.1"/>
    <property type="molecule type" value="mRNA"/>
</dbReference>
<dbReference type="EMBL" id="AY086950">
    <property type="protein sequence ID" value="AAM67367.1"/>
    <property type="molecule type" value="mRNA"/>
</dbReference>
<dbReference type="RefSeq" id="NP_188247.2">
    <property type="nucleotide sequence ID" value="NM_112497.3"/>
</dbReference>
<dbReference type="SMR" id="F4J1H7"/>
<dbReference type="FunCoup" id="F4J1H7">
    <property type="interactions" value="4201"/>
</dbReference>
<dbReference type="STRING" id="3702.F4J1H7"/>
<dbReference type="iPTMnet" id="F4J1H7"/>
<dbReference type="PaxDb" id="3702-AT3G16260.1"/>
<dbReference type="ProteomicsDB" id="227953"/>
<dbReference type="EnsemblPlants" id="AT3G16260.1">
    <property type="protein sequence ID" value="AT3G16260.1"/>
    <property type="gene ID" value="AT3G16260"/>
</dbReference>
<dbReference type="GeneID" id="820872"/>
<dbReference type="Gramene" id="AT3G16260.1">
    <property type="protein sequence ID" value="AT3G16260.1"/>
    <property type="gene ID" value="AT3G16260"/>
</dbReference>
<dbReference type="KEGG" id="ath:AT3G16260"/>
<dbReference type="Araport" id="AT3G16260"/>
<dbReference type="TAIR" id="AT3G16260">
    <property type="gene designation" value="TRZ4"/>
</dbReference>
<dbReference type="eggNOG" id="KOG2121">
    <property type="taxonomic scope" value="Eukaryota"/>
</dbReference>
<dbReference type="HOGENOM" id="CLU_006220_2_0_1"/>
<dbReference type="InParanoid" id="F4J1H7"/>
<dbReference type="PRO" id="PR:F4J1H7"/>
<dbReference type="Proteomes" id="UP000006548">
    <property type="component" value="Chromosome 3"/>
</dbReference>
<dbReference type="ExpressionAtlas" id="F4J1H7">
    <property type="expression patterns" value="baseline and differential"/>
</dbReference>
<dbReference type="GO" id="GO:0005739">
    <property type="term" value="C:mitochondrion"/>
    <property type="evidence" value="ECO:0007669"/>
    <property type="project" value="UniProtKB-SubCell"/>
</dbReference>
<dbReference type="GO" id="GO:0042781">
    <property type="term" value="F:3'-tRNA processing endoribonuclease activity"/>
    <property type="evidence" value="ECO:0000314"/>
    <property type="project" value="TAIR"/>
</dbReference>
<dbReference type="GO" id="GO:0046872">
    <property type="term" value="F:metal ion binding"/>
    <property type="evidence" value="ECO:0007669"/>
    <property type="project" value="UniProtKB-KW"/>
</dbReference>
<dbReference type="GO" id="GO:0042780">
    <property type="term" value="P:tRNA 3'-end processing"/>
    <property type="evidence" value="ECO:0000314"/>
    <property type="project" value="TAIR"/>
</dbReference>
<dbReference type="CDD" id="cd07718">
    <property type="entry name" value="RNaseZ_ELAC1_ELAC2-C-term-like_MBL-fold"/>
    <property type="match status" value="1"/>
</dbReference>
<dbReference type="FunFam" id="3.60.15.10:FF:000052">
    <property type="entry name" value="tRNAse Z TRZ4, mitochondrial"/>
    <property type="match status" value="1"/>
</dbReference>
<dbReference type="FunFam" id="3.60.15.10:FF:000037">
    <property type="entry name" value="tRNAse Z4"/>
    <property type="match status" value="1"/>
</dbReference>
<dbReference type="Gene3D" id="3.60.15.10">
    <property type="entry name" value="Ribonuclease Z/Hydroxyacylglutathione hydrolase-like"/>
    <property type="match status" value="2"/>
</dbReference>
<dbReference type="HAMAP" id="MF_01818">
    <property type="entry name" value="RNase_Z_BN"/>
    <property type="match status" value="1"/>
</dbReference>
<dbReference type="InterPro" id="IPR036866">
    <property type="entry name" value="RibonucZ/Hydroxyglut_hydro"/>
</dbReference>
<dbReference type="InterPro" id="IPR013471">
    <property type="entry name" value="RNase_Z/BN"/>
</dbReference>
<dbReference type="InterPro" id="IPR047151">
    <property type="entry name" value="RNZ2-like"/>
</dbReference>
<dbReference type="InterPro" id="IPR027794">
    <property type="entry name" value="tRNase_Z_dom"/>
</dbReference>
<dbReference type="PANTHER" id="PTHR12553">
    <property type="entry name" value="ZINC PHOSPHODIESTERASE ELAC PROTEIN 2"/>
    <property type="match status" value="1"/>
</dbReference>
<dbReference type="PANTHER" id="PTHR12553:SF49">
    <property type="entry name" value="ZINC PHOSPHODIESTERASE ELAC PROTEIN 2"/>
    <property type="match status" value="1"/>
</dbReference>
<dbReference type="Pfam" id="PF13691">
    <property type="entry name" value="Lactamase_B_4"/>
    <property type="match status" value="1"/>
</dbReference>
<dbReference type="SUPFAM" id="SSF56281">
    <property type="entry name" value="Metallo-hydrolase/oxidoreductase"/>
    <property type="match status" value="2"/>
</dbReference>
<proteinExistence type="evidence at transcript level"/>
<feature type="transit peptide" description="Mitochondrion" evidence="2">
    <location>
        <begin position="1"/>
        <end position="50"/>
    </location>
</feature>
<feature type="chain" id="PRO_0000439064" description="tRNAse Z TRZ4, mitochondrial" evidence="2">
    <location>
        <begin position="51"/>
        <end position="942"/>
    </location>
</feature>
<feature type="region of interest" description="Disordered" evidence="3">
    <location>
        <begin position="38"/>
        <end position="85"/>
    </location>
</feature>
<feature type="compositionally biased region" description="Basic and acidic residues" evidence="3">
    <location>
        <begin position="67"/>
        <end position="85"/>
    </location>
</feature>
<feature type="sequence conflict" description="In Ref. 3; BAC41975." evidence="6" ref="3">
    <original>N</original>
    <variation>K</variation>
    <location>
        <position position="678"/>
    </location>
</feature>
<feature type="sequence conflict" description="In Ref. 4; AAM67367." evidence="6" ref="4">
    <original>Q</original>
    <variation>H</variation>
    <location>
        <position position="733"/>
    </location>
</feature>
<feature type="sequence conflict" description="In Ref. 4; AAM67367." evidence="6" ref="4">
    <original>V</original>
    <variation>VE</variation>
    <location>
        <position position="917"/>
    </location>
</feature>
<organism evidence="9">
    <name type="scientific">Arabidopsis thaliana</name>
    <name type="common">Mouse-ear cress</name>
    <dbReference type="NCBI Taxonomy" id="3702"/>
    <lineage>
        <taxon>Eukaryota</taxon>
        <taxon>Viridiplantae</taxon>
        <taxon>Streptophyta</taxon>
        <taxon>Embryophyta</taxon>
        <taxon>Tracheophyta</taxon>
        <taxon>Spermatophyta</taxon>
        <taxon>Magnoliopsida</taxon>
        <taxon>eudicotyledons</taxon>
        <taxon>Gunneridae</taxon>
        <taxon>Pentapetalae</taxon>
        <taxon>rosids</taxon>
        <taxon>malvids</taxon>
        <taxon>Brassicales</taxon>
        <taxon>Brassicaceae</taxon>
        <taxon>Camelineae</taxon>
        <taxon>Arabidopsis</taxon>
    </lineage>
</organism>
<evidence type="ECO:0000250" key="1">
    <source>
        <dbReference type="UniProtKB" id="Q8LGU7"/>
    </source>
</evidence>
<evidence type="ECO:0000255" key="2"/>
<evidence type="ECO:0000256" key="3">
    <source>
        <dbReference type="SAM" id="MobiDB-lite"/>
    </source>
</evidence>
<evidence type="ECO:0000269" key="4">
    <source>
    </source>
</evidence>
<evidence type="ECO:0000303" key="5">
    <source>
    </source>
</evidence>
<evidence type="ECO:0000305" key="6"/>
<evidence type="ECO:0000312" key="7">
    <source>
        <dbReference type="Araport" id="AT3G16260"/>
    </source>
</evidence>
<evidence type="ECO:0000312" key="8">
    <source>
        <dbReference type="EMBL" id="BAB01266.1"/>
    </source>
</evidence>
<evidence type="ECO:0000312" key="9">
    <source>
        <dbReference type="Proteomes" id="UP000006548"/>
    </source>
</evidence>
<sequence length="942" mass="104727">MLTSSMPQNLSLFGFSPLKSSSFALILRPFSLYPPIFASSSPAPSRRPPRTAGYRRSGPSPPRRKWSSFEEQKRKGRSPMEKDKAISFNHSSDSFEFNKRRAEGLDKVDKPKKNLKRNTRTLNPTNTIAYVQILGTGMDTQDTSPSVLLFFDKQRFIFNAGEGLQRFCTEHKIKLSKVDHIFLSRVCSETAGGLPGLLLTLAGIGEQGLSVNVWGPSDLKYLVDAMRSFIPRAAMVHTRSFGPSLNISDSAPQIGLSKPKDDAYVLVDDEVVKISAILLEPSRLEESGSKPGETAVIYVCELPEIKGKFDPKKAMALGLRAGPKYSYLQSGQSVKSDFKDITVHPSDVMGPSVPGPVVLLVDCPTESHAEELLSIPSMKTYYSCLDNSTDGAKLVNCIIHLSPASVTNSSTYRSWMKRFHSAQHILAGHEAKNMEFPILRASSRITARLNYLCPQFFPAPGFWSHQHDNNSINPTSLSKCFDSNLGESISAENLLKFTLRPHGNLGVDRSSIPSRLTALRVMDELLSEIPEISSKTEEIKQLWNGQHNKMMIEEPWLGESTVPSCLENIRRDDMEIVLLGTGSSQPSKYRNVTAIYIDLFSRGSILLDCGEGTLGQLKRRYGLEGADEAVRNLRCIWISHIHADHHTGLARILARRRELLKGLAHEPAIVVGPRSLKNFLDAYQRLEDLDMEFLDCRNTTTTSWASVETSRPEKNTSSGNAEGSLFSKGSLMQSIYKRPSSPLTDNSSALPFLKKLKKVLGEMGLEHLISFPVVHCPQAFGVSLKAAERKNIAGDEIPGWKMVYSGDTRPCPEMVEASKGATVLIHEATFEDALVEEAVAKNHSTTKEAIKVGSSAGVYRTVLTHFSQRYPKIPVIDESHMHNTCIAFDMMSINMADLHVLPKILPYFKTLFRNQVVEEEEEEEETDDDSLIRDKVPSFFIN</sequence>
<comment type="function">
    <text evidence="4">Zinc phosphodiesterase, which displays tRNA 3'-processing endonuclease activity. Involved in tRNA maturation, by removing a 3'-trailer from precursor tRNA. Can process the mitochondrial tRNA-like structures (t-elements).</text>
</comment>
<comment type="catalytic activity">
    <reaction evidence="4">
        <text>Endonucleolytic cleavage of RNA, removing extra 3' nucleotides from tRNA precursor, generating 3' termini of tRNAs. A 3'-hydroxy group is left at the tRNA terminus and a 5'-phosphoryl group is left at the trailer molecule.</text>
        <dbReference type="EC" id="3.1.26.11"/>
    </reaction>
</comment>
<comment type="cofactor">
    <cofactor evidence="1">
        <name>Zn(2+)</name>
        <dbReference type="ChEBI" id="CHEBI:29105"/>
    </cofactor>
    <cofactor evidence="1">
        <name>Ca(2+)</name>
        <dbReference type="ChEBI" id="CHEBI:29108"/>
    </cofactor>
    <cofactor evidence="1">
        <name>Mn(2+)</name>
        <dbReference type="ChEBI" id="CHEBI:29035"/>
    </cofactor>
    <cofactor evidence="1">
        <name>Mg(2+)</name>
        <dbReference type="ChEBI" id="CHEBI:18420"/>
    </cofactor>
</comment>
<comment type="subunit">
    <text evidence="1">Homodimer.</text>
</comment>
<comment type="subcellular location">
    <subcellularLocation>
        <location evidence="4">Mitochondrion</location>
    </subcellularLocation>
</comment>
<comment type="disruption phenotype">
    <text evidence="4">No visible phenotype due to the redundancy with TRZ3. Trz3 and trz4 double mutants are lethal.</text>
</comment>
<comment type="similarity">
    <text evidence="6">Belongs to the RNase Z family.</text>
</comment>
<comment type="sequence caution" evidence="6">
    <conflict type="erroneous gene model prediction">
        <sequence resource="EMBL-CDS" id="BAB01266"/>
    </conflict>
</comment>
<reference key="1">
    <citation type="journal article" date="2000" name="DNA Res.">
        <title>Structural analysis of Arabidopsis thaliana chromosome 3. I. Sequence features of the regions of 4,504,864 bp covered by sixty P1 and TAC clones.</title>
        <authorList>
            <person name="Sato S."/>
            <person name="Nakamura Y."/>
            <person name="Kaneko T."/>
            <person name="Katoh T."/>
            <person name="Asamizu E."/>
            <person name="Tabata S."/>
        </authorList>
    </citation>
    <scope>NUCLEOTIDE SEQUENCE [LARGE SCALE GENOMIC DNA]</scope>
    <source>
        <strain>cv. Columbia</strain>
    </source>
</reference>
<reference key="2">
    <citation type="journal article" date="2017" name="Plant J.">
        <title>Araport11: a complete reannotation of the Arabidopsis thaliana reference genome.</title>
        <authorList>
            <person name="Cheng C.Y."/>
            <person name="Krishnakumar V."/>
            <person name="Chan A.P."/>
            <person name="Thibaud-Nissen F."/>
            <person name="Schobel S."/>
            <person name="Town C.D."/>
        </authorList>
    </citation>
    <scope>GENOME REANNOTATION</scope>
    <source>
        <strain>cv. Columbia</strain>
    </source>
</reference>
<reference key="3">
    <citation type="journal article" date="2002" name="Science">
        <title>Functional annotation of a full-length Arabidopsis cDNA collection.</title>
        <authorList>
            <person name="Seki M."/>
            <person name="Narusaka M."/>
            <person name="Kamiya A."/>
            <person name="Ishida J."/>
            <person name="Satou M."/>
            <person name="Sakurai T."/>
            <person name="Nakajima M."/>
            <person name="Enju A."/>
            <person name="Akiyama K."/>
            <person name="Oono Y."/>
            <person name="Muramatsu M."/>
            <person name="Hayashizaki Y."/>
            <person name="Kawai J."/>
            <person name="Carninci P."/>
            <person name="Itoh M."/>
            <person name="Ishii Y."/>
            <person name="Arakawa T."/>
            <person name="Shibata K."/>
            <person name="Shinagawa A."/>
            <person name="Shinozaki K."/>
        </authorList>
    </citation>
    <scope>NUCLEOTIDE SEQUENCE [LARGE SCALE MRNA]</scope>
    <source>
        <strain>cv. Columbia</strain>
    </source>
</reference>
<reference key="4">
    <citation type="submission" date="2002-03" db="EMBL/GenBank/DDBJ databases">
        <title>Full-length cDNA from Arabidopsis thaliana.</title>
        <authorList>
            <person name="Brover V.V."/>
            <person name="Troukhan M.E."/>
            <person name="Alexandrov N.A."/>
            <person name="Lu Y.-P."/>
            <person name="Flavell R.B."/>
            <person name="Feldmann K.A."/>
        </authorList>
    </citation>
    <scope>NUCLEOTIDE SEQUENCE [LARGE SCALE MRNA] OF 435-942</scope>
</reference>
<reference key="5">
    <citation type="journal article" date="2005" name="Biol. Chem.">
        <title>The tRNase Z family of proteins: physiological functions, substrate specificity and structural properties.</title>
        <authorList>
            <person name="Vogel A."/>
            <person name="Schilling O."/>
            <person name="Spaeth B."/>
            <person name="Marchfelder A."/>
        </authorList>
    </citation>
    <scope>GENE FAMILY</scope>
    <scope>NOMENCLATURE</scope>
</reference>
<reference key="6">
    <citation type="journal article" date="2009" name="Plant Physiol.">
        <title>Arabidopsis encodes four tRNase Z enzymes.</title>
        <authorList>
            <person name="Canino G."/>
            <person name="Bocian E."/>
            <person name="Barbezier N."/>
            <person name="Echeverria M."/>
            <person name="Forner J."/>
            <person name="Binder S."/>
            <person name="Marchfelder A."/>
        </authorList>
    </citation>
    <scope>FUNCTION</scope>
    <scope>SUBCELLULAR LOCATION</scope>
    <scope>DISRUPTION PHENOTYPE</scope>
</reference>
<name>RNZ4_ARATH</name>
<keyword id="KW-0106">Calcium</keyword>
<keyword id="KW-0255">Endonuclease</keyword>
<keyword id="KW-0378">Hydrolase</keyword>
<keyword id="KW-0460">Magnesium</keyword>
<keyword id="KW-0464">Manganese</keyword>
<keyword id="KW-0479">Metal-binding</keyword>
<keyword id="KW-0496">Mitochondrion</keyword>
<keyword id="KW-0540">Nuclease</keyword>
<keyword id="KW-1185">Reference proteome</keyword>
<keyword id="KW-0809">Transit peptide</keyword>
<keyword id="KW-0819">tRNA processing</keyword>
<keyword id="KW-0862">Zinc</keyword>
<accession>F4J1H7</accession>
<accession>Q8GYZ2</accession>
<accession>Q8LBW8</accession>
<accession>Q9LU20</accession>
<protein>
    <recommendedName>
        <fullName evidence="5">tRNAse Z TRZ4, mitochondrial</fullName>
        <ecNumber evidence="4">3.1.26.11</ecNumber>
    </recommendedName>
    <alternativeName>
        <fullName evidence="5">Long tRNase Z 2</fullName>
    </alternativeName>
    <alternativeName>
        <fullName evidence="5">tRNase ZL2</fullName>
        <shortName evidence="5">AthTRZL2</shortName>
    </alternativeName>
</protein>
<gene>
    <name evidence="5" type="primary">TRZ4</name>
    <name evidence="7" type="ordered locus">At3g16260</name>
    <name evidence="8" type="ORF">MYA6.7</name>
</gene>